<comment type="subcellular location">
    <subcellularLocation>
        <location evidence="4">Nucleus</location>
    </subcellularLocation>
</comment>
<comment type="alternative products">
    <event type="alternative splicing"/>
    <isoform>
        <id>Q96PT4-1</id>
        <name>1</name>
        <sequence type="displayed"/>
    </isoform>
    <isoform>
        <id>Q96PT4-2</id>
        <name>2</name>
        <sequence type="described" ref="VSP_020958"/>
    </isoform>
</comment>
<comment type="tissue specificity">
    <text evidence="3">Expressed in hepatoma Hep3B cells.</text>
</comment>
<comment type="developmental stage">
    <text evidence="3">Expressed in fetal tissue.</text>
</comment>
<comment type="miscellaneous">
    <text>DUX genes are present in 3.3-kilobase elements, a tandem repeat family scattered in the genome found on the short arms of all acrocentric chromosomes as well as on several other chromosomes. May be functional despite lack of introns and of a poly(A) addition signal.</text>
</comment>
<comment type="similarity">
    <text evidence="4">Belongs to the paired homeobox family.</text>
</comment>
<proteinExistence type="evidence at transcript level"/>
<sequence length="197" mass="22130">MPAEVHGSPPASLCPCPSVKFRPGLPAMALLTALDDTLPEEAQGPGRRMILLSTPSQSDALRACFERNLYPGIATKEQLAQGIDIPEPRVQIWFQNERSCQLRQHRRQSRPWPGRRDPQKGRRKRTAITGSQTALLLRAFEKDRFPGIPAREELARETGLPESRIQLWFQNRRARHWGQSGRAPTQASIRCNAAPIG</sequence>
<protein>
    <recommendedName>
        <fullName>Putative double homeobox protein 3</fullName>
    </recommendedName>
</protein>
<gene>
    <name type="primary">DUX3</name>
</gene>
<evidence type="ECO:0000255" key="1">
    <source>
        <dbReference type="PROSITE-ProRule" id="PRU00108"/>
    </source>
</evidence>
<evidence type="ECO:0000256" key="2">
    <source>
        <dbReference type="SAM" id="MobiDB-lite"/>
    </source>
</evidence>
<evidence type="ECO:0000269" key="3">
    <source>
    </source>
</evidence>
<evidence type="ECO:0000305" key="4"/>
<feature type="chain" id="PRO_0000252412" description="Putative double homeobox protein 3">
    <location>
        <begin position="1"/>
        <end position="197"/>
    </location>
</feature>
<feature type="DNA-binding region" description="Homeobox 1" evidence="1">
    <location>
        <begin position="46"/>
        <end position="105"/>
    </location>
</feature>
<feature type="DNA-binding region" description="Homeobox 2" evidence="1">
    <location>
        <begin position="121"/>
        <end position="180"/>
    </location>
</feature>
<feature type="region of interest" description="Disordered" evidence="2">
    <location>
        <begin position="102"/>
        <end position="127"/>
    </location>
</feature>
<feature type="splice variant" id="VSP_020958" description="In isoform 2." evidence="4">
    <location>
        <begin position="1"/>
        <end position="27"/>
    </location>
</feature>
<organism>
    <name type="scientific">Homo sapiens</name>
    <name type="common">Human</name>
    <dbReference type="NCBI Taxonomy" id="9606"/>
    <lineage>
        <taxon>Eukaryota</taxon>
        <taxon>Metazoa</taxon>
        <taxon>Chordata</taxon>
        <taxon>Craniata</taxon>
        <taxon>Vertebrata</taxon>
        <taxon>Euteleostomi</taxon>
        <taxon>Mammalia</taxon>
        <taxon>Eutheria</taxon>
        <taxon>Euarchontoglires</taxon>
        <taxon>Primates</taxon>
        <taxon>Haplorrhini</taxon>
        <taxon>Catarrhini</taxon>
        <taxon>Hominidae</taxon>
        <taxon>Homo</taxon>
    </lineage>
</organism>
<reference key="1">
    <citation type="journal article" date="2001" name="Gene">
        <title>Active genes in junk DNA? Characterization of DUX genes embedded within 3.3 kb repeated elements.</title>
        <authorList>
            <person name="Beckers M.-C."/>
            <person name="Gabrieels J."/>
            <person name="van der Maarel S."/>
            <person name="De Vriese A."/>
            <person name="Frants R.R."/>
            <person name="Collen D."/>
            <person name="Belayew A."/>
        </authorList>
    </citation>
    <scope>NUCLEOTIDE SEQUENCE [GENOMIC DNA] (ISOFORMS 1 AND 2)</scope>
    <scope>TISSUE SPECIFICITY</scope>
    <scope>ALTERNATIVE SPLICING</scope>
    <scope>DEVELOPMENTAL STAGE</scope>
    <source>
        <tissue>Blood</tissue>
    </source>
</reference>
<keyword id="KW-0025">Alternative splicing</keyword>
<keyword id="KW-0238">DNA-binding</keyword>
<keyword id="KW-0371">Homeobox</keyword>
<keyword id="KW-0539">Nucleus</keyword>
<keyword id="KW-1185">Reference proteome</keyword>
<keyword id="KW-0677">Repeat</keyword>
<dbReference type="EMBL" id="AF133130">
    <property type="protein sequence ID" value="AAL02242.1"/>
    <property type="molecule type" value="Genomic_DNA"/>
</dbReference>
<dbReference type="EMBL" id="AF133130">
    <property type="protein sequence ID" value="AAD33597.1"/>
    <property type="molecule type" value="Genomic_DNA"/>
</dbReference>
<dbReference type="SMR" id="Q96PT4"/>
<dbReference type="BioGRID" id="117751">
    <property type="interactions" value="27"/>
</dbReference>
<dbReference type="FunCoup" id="Q96PT4">
    <property type="interactions" value="99"/>
</dbReference>
<dbReference type="IntAct" id="Q96PT4">
    <property type="interactions" value="12"/>
</dbReference>
<dbReference type="MINT" id="Q96PT4"/>
<dbReference type="BioMuta" id="HGNC:3081"/>
<dbReference type="DMDM" id="74717114"/>
<dbReference type="MassIVE" id="Q96PT4"/>
<dbReference type="DNASU" id="26582"/>
<dbReference type="AGR" id="HGNC:3081"/>
<dbReference type="GeneCards" id="DUX3"/>
<dbReference type="HGNC" id="HGNC:3081">
    <property type="gene designation" value="DUX3"/>
</dbReference>
<dbReference type="MIM" id="611443">
    <property type="type" value="gene"/>
</dbReference>
<dbReference type="neXtProt" id="NX_Q96PT4"/>
<dbReference type="PharmGKB" id="PA27537"/>
<dbReference type="InParanoid" id="Q96PT4"/>
<dbReference type="PAN-GO" id="Q96PT4">
    <property type="GO annotations" value="4 GO annotations based on evolutionary models"/>
</dbReference>
<dbReference type="PhylomeDB" id="Q96PT4"/>
<dbReference type="PathwayCommons" id="Q96PT4"/>
<dbReference type="SignaLink" id="Q96PT4"/>
<dbReference type="Pharos" id="Q96PT4">
    <property type="development level" value="Tdark"/>
</dbReference>
<dbReference type="PRO" id="PR:Q96PT4"/>
<dbReference type="Proteomes" id="UP000005640">
    <property type="component" value="Unplaced"/>
</dbReference>
<dbReference type="RNAct" id="Q96PT4">
    <property type="molecule type" value="protein"/>
</dbReference>
<dbReference type="GO" id="GO:0005634">
    <property type="term" value="C:nucleus"/>
    <property type="evidence" value="ECO:0000318"/>
    <property type="project" value="GO_Central"/>
</dbReference>
<dbReference type="GO" id="GO:0000981">
    <property type="term" value="F:DNA-binding transcription factor activity, RNA polymerase II-specific"/>
    <property type="evidence" value="ECO:0000318"/>
    <property type="project" value="GO_Central"/>
</dbReference>
<dbReference type="GO" id="GO:0000977">
    <property type="term" value="F:RNA polymerase II transcription regulatory region sequence-specific DNA binding"/>
    <property type="evidence" value="ECO:0000318"/>
    <property type="project" value="GO_Central"/>
</dbReference>
<dbReference type="GO" id="GO:0006357">
    <property type="term" value="P:regulation of transcription by RNA polymerase II"/>
    <property type="evidence" value="ECO:0000318"/>
    <property type="project" value="GO_Central"/>
</dbReference>
<dbReference type="CDD" id="cd00086">
    <property type="entry name" value="homeodomain"/>
    <property type="match status" value="2"/>
</dbReference>
<dbReference type="FunFam" id="1.10.10.60:FF:000325">
    <property type="entry name" value="Double homeobox protein 4"/>
    <property type="match status" value="1"/>
</dbReference>
<dbReference type="FunFam" id="1.10.10.60:FF:000354">
    <property type="entry name" value="Double homeobox protein 4"/>
    <property type="match status" value="1"/>
</dbReference>
<dbReference type="Gene3D" id="1.10.10.60">
    <property type="entry name" value="Homeodomain-like"/>
    <property type="match status" value="2"/>
</dbReference>
<dbReference type="InterPro" id="IPR001356">
    <property type="entry name" value="HD"/>
</dbReference>
<dbReference type="InterPro" id="IPR051306">
    <property type="entry name" value="Homeobox_regulator"/>
</dbReference>
<dbReference type="InterPro" id="IPR009057">
    <property type="entry name" value="Homeodomain-like_sf"/>
</dbReference>
<dbReference type="InterPro" id="IPR000047">
    <property type="entry name" value="HTH_motif"/>
</dbReference>
<dbReference type="PANTHER" id="PTHR46123:SF3">
    <property type="entry name" value="DOUBLE HOMEOBOX PROTEIN 1-RELATED"/>
    <property type="match status" value="1"/>
</dbReference>
<dbReference type="PANTHER" id="PTHR46123">
    <property type="entry name" value="MIX-TYPE HOMEOBOX GENE 1-RELATED"/>
    <property type="match status" value="1"/>
</dbReference>
<dbReference type="Pfam" id="PF00046">
    <property type="entry name" value="Homeodomain"/>
    <property type="match status" value="2"/>
</dbReference>
<dbReference type="PRINTS" id="PR00031">
    <property type="entry name" value="HTHREPRESSR"/>
</dbReference>
<dbReference type="SMART" id="SM00389">
    <property type="entry name" value="HOX"/>
    <property type="match status" value="2"/>
</dbReference>
<dbReference type="SUPFAM" id="SSF46689">
    <property type="entry name" value="Homeodomain-like"/>
    <property type="match status" value="2"/>
</dbReference>
<dbReference type="PROSITE" id="PS00027">
    <property type="entry name" value="HOMEOBOX_1"/>
    <property type="match status" value="1"/>
</dbReference>
<dbReference type="PROSITE" id="PS50071">
    <property type="entry name" value="HOMEOBOX_2"/>
    <property type="match status" value="2"/>
</dbReference>
<accession>Q96PT4</accession>
<accession>Q9UND2</accession>
<name>DUX3_HUMAN</name>